<comment type="function">
    <text evidence="1">Binds to the host phosphopolysaccharides at the onset of infection. Upon activation by calcium, the receptor binding proteins change their conformation, presenting their binding sites to the host, and a channel opens at the bottom of the baseplate for DNA ejection.</text>
</comment>
<comment type="subunit">
    <text evidence="1">Homotrimer; found as an assembly of 6 homotrimers. Interacts with host phosphopolysaccharides; this allows the virus to bind the external cell wall layer. Interacts with the distal tail protein.</text>
</comment>
<comment type="subcellular location">
    <subcellularLocation>
        <location evidence="1">Virion</location>
    </subcellularLocation>
    <text evidence="1">Part of the baseplate.</text>
</comment>
<comment type="domain">
    <text evidence="1">The C-terminus is involved in host receptor binding. Host-recognition domains point upwards, towards the capsid.</text>
</comment>
<comment type="similarity">
    <text evidence="2">Belongs to the skunalikevirus receptor binding protein family.</text>
</comment>
<name>RBP_BPLSK</name>
<keyword id="KW-0945">Host-virus interaction</keyword>
<keyword id="KW-1185">Reference proteome</keyword>
<keyword id="KW-1161">Viral attachment to host cell</keyword>
<keyword id="KW-1234">Viral attachment to host entry receptor</keyword>
<keyword id="KW-1226">Viral baseplate protein</keyword>
<keyword id="KW-1227">Viral tail protein</keyword>
<keyword id="KW-0946">Virion</keyword>
<keyword id="KW-1160">Virus entry into host cell</keyword>
<evidence type="ECO:0000250" key="1">
    <source>
        <dbReference type="UniProtKB" id="Q71AW2"/>
    </source>
</evidence>
<evidence type="ECO:0000305" key="2"/>
<organism>
    <name type="scientific">Lactococcus phage SK1</name>
    <name type="common">Lactococcus lactis bacteriophage SK1</name>
    <dbReference type="NCBI Taxonomy" id="2905675"/>
    <lineage>
        <taxon>Viruses</taxon>
        <taxon>Duplodnaviria</taxon>
        <taxon>Heunggongvirae</taxon>
        <taxon>Uroviricota</taxon>
        <taxon>Caudoviricetes</taxon>
        <taxon>Skunavirus</taxon>
        <taxon>Skunavirus sk1</taxon>
    </lineage>
</organism>
<feature type="chain" id="PRO_0000438267" description="Receptor binding protein">
    <location>
        <begin position="1"/>
        <end position="264"/>
    </location>
</feature>
<feature type="region of interest" description="Host receptor binding" evidence="1">
    <location>
        <begin position="164"/>
        <end position="264"/>
    </location>
</feature>
<sequence>MTIKNFTFFSPNSTEFPVGSNNDGKLYMMLTGMDYRTIRRKDWSSPLNTALNVQYTNTSIIAGGRYFELLNETVALKGNAVNYIHANIDLTRTANPVSLSAETSNNSNGVDINNGSGVLKVCFDIVTTSGTGVTSTKPTVQTSTLDSISVNDMTVSGSIDVPVQTLTVEAGNGLDLQLTKKNNDLVIVRFFGSVSNIQKGWNMSGTWVDRPFRPAVVQSLVGHFAGRDTSFHIDINPNGSITWWGESIDNTPIATRGNGSYFIK</sequence>
<reference key="1">
    <citation type="journal article" date="1997" name="Mol. Microbiol.">
        <title>Analysis of the DNA sequence, gene expression, origin of replication and modular structure of the Lactococcus lactis lytic bacteriophage sk1.</title>
        <authorList>
            <person name="Chandry P.S."/>
            <person name="Moore S.C."/>
            <person name="Boyce J.D."/>
            <person name="Davidson B.E."/>
            <person name="Hillier A.J."/>
        </authorList>
    </citation>
    <scope>NUCLEOTIDE SEQUENCE [LARGE SCALE GENOMIC DNA]</scope>
</reference>
<organismHost>
    <name type="scientific">Lactococcus lactis</name>
    <dbReference type="NCBI Taxonomy" id="1358"/>
</organismHost>
<proteinExistence type="inferred from homology"/>
<accession>O21886</accession>
<protein>
    <recommendedName>
        <fullName>Receptor binding protein</fullName>
        <shortName>RBP</shortName>
    </recommendedName>
    <alternativeName>
        <fullName>Gene product 18</fullName>
        <shortName>Gp18</shortName>
    </alternativeName>
</protein>
<dbReference type="EMBL" id="AF011378">
    <property type="protein sequence ID" value="AAB70057.1"/>
    <property type="molecule type" value="Genomic_DNA"/>
</dbReference>
<dbReference type="RefSeq" id="NP_044964.1">
    <property type="nucleotide sequence ID" value="NC_001835.1"/>
</dbReference>
<dbReference type="SMR" id="O21886"/>
<dbReference type="GeneID" id="1261277"/>
<dbReference type="KEGG" id="vg:1261277"/>
<dbReference type="Proteomes" id="UP000000839">
    <property type="component" value="Genome"/>
</dbReference>
<dbReference type="GO" id="GO:0098025">
    <property type="term" value="C:virus tail, baseplate"/>
    <property type="evidence" value="ECO:0007669"/>
    <property type="project" value="UniProtKB-KW"/>
</dbReference>
<dbReference type="GO" id="GO:0007155">
    <property type="term" value="P:cell adhesion"/>
    <property type="evidence" value="ECO:0007669"/>
    <property type="project" value="InterPro"/>
</dbReference>
<dbReference type="GO" id="GO:0098670">
    <property type="term" value="P:entry receptor-mediated virion attachment to host cell"/>
    <property type="evidence" value="ECO:0007669"/>
    <property type="project" value="UniProtKB-KW"/>
</dbReference>
<dbReference type="GO" id="GO:0046718">
    <property type="term" value="P:symbiont entry into host cell"/>
    <property type="evidence" value="ECO:0007669"/>
    <property type="project" value="UniProtKB-KW"/>
</dbReference>
<dbReference type="CDD" id="cd07964">
    <property type="entry name" value="RBP-H"/>
    <property type="match status" value="1"/>
</dbReference>
<dbReference type="FunFam" id="2.60.520.10:FF:000001">
    <property type="entry name" value="Receptor binding protein"/>
    <property type="match status" value="1"/>
</dbReference>
<dbReference type="Gene3D" id="2.60.520.10">
    <property type="entry name" value="Phage fibre proteins"/>
    <property type="match status" value="1"/>
</dbReference>
<dbReference type="Gene3D" id="2.60.40.1830">
    <property type="entry name" value="Phage tail base-plate Siphoviridae RBP, head domain"/>
    <property type="match status" value="1"/>
</dbReference>
<dbReference type="InterPro" id="IPR008982">
    <property type="entry name" value="Adenovirus_pIV-like_att"/>
</dbReference>
<dbReference type="InterPro" id="IPR048780">
    <property type="entry name" value="Caudo_bapla_N"/>
</dbReference>
<dbReference type="InterPro" id="IPR015027">
    <property type="entry name" value="Caudo_bapla_RBP"/>
</dbReference>
<dbReference type="InterPro" id="IPR048779">
    <property type="entry name" value="Caudo_bapla_RBP_neck"/>
</dbReference>
<dbReference type="Pfam" id="PF20747">
    <property type="entry name" value="Caudo_bapla_N"/>
    <property type="match status" value="1"/>
</dbReference>
<dbReference type="Pfam" id="PF08931">
    <property type="entry name" value="Caudo_bapla_RBP"/>
    <property type="match status" value="1"/>
</dbReference>
<dbReference type="Pfam" id="PF21564">
    <property type="entry name" value="Caudo_bapla_RBP_neck"/>
    <property type="match status" value="1"/>
</dbReference>
<dbReference type="SUPFAM" id="SSF141658">
    <property type="entry name" value="Bacteriophage trimeric proteins domain"/>
    <property type="match status" value="1"/>
</dbReference>
<dbReference type="SUPFAM" id="SSF69349">
    <property type="entry name" value="Phage fibre proteins"/>
    <property type="match status" value="1"/>
</dbReference>
<dbReference type="SUPFAM" id="SSF49835">
    <property type="entry name" value="Virus attachment protein globular domain"/>
    <property type="match status" value="1"/>
</dbReference>